<comment type="function">
    <text evidence="1">Involved in the biosynthesis of ADP-glucose, a building block required for the elongation reactions to produce glycogen. Catalyzes the reaction between ATP and alpha-D-glucose 1-phosphate (G1P) to produce pyrophosphate and ADP-Glc.</text>
</comment>
<comment type="catalytic activity">
    <reaction evidence="1">
        <text>alpha-D-glucose 1-phosphate + ATP + H(+) = ADP-alpha-D-glucose + diphosphate</text>
        <dbReference type="Rhea" id="RHEA:12120"/>
        <dbReference type="ChEBI" id="CHEBI:15378"/>
        <dbReference type="ChEBI" id="CHEBI:30616"/>
        <dbReference type="ChEBI" id="CHEBI:33019"/>
        <dbReference type="ChEBI" id="CHEBI:57498"/>
        <dbReference type="ChEBI" id="CHEBI:58601"/>
        <dbReference type="EC" id="2.7.7.27"/>
    </reaction>
</comment>
<comment type="pathway">
    <text evidence="1">Glycan biosynthesis; glycogen biosynthesis.</text>
</comment>
<comment type="subunit">
    <text evidence="1">Homotetramer.</text>
</comment>
<comment type="similarity">
    <text evidence="1">Belongs to the bacterial/plant glucose-1-phosphate adenylyltransferase family.</text>
</comment>
<organism>
    <name type="scientific">Mannheimia succiniciproducens (strain KCTC 0769BP / MBEL55E)</name>
    <dbReference type="NCBI Taxonomy" id="221988"/>
    <lineage>
        <taxon>Bacteria</taxon>
        <taxon>Pseudomonadati</taxon>
        <taxon>Pseudomonadota</taxon>
        <taxon>Gammaproteobacteria</taxon>
        <taxon>Pasteurellales</taxon>
        <taxon>Pasteurellaceae</taxon>
        <taxon>Basfia</taxon>
    </lineage>
</organism>
<reference key="1">
    <citation type="journal article" date="2004" name="Nat. Biotechnol.">
        <title>The genome sequence of the capnophilic rumen bacterium Mannheimia succiniciproducens.</title>
        <authorList>
            <person name="Hong S.H."/>
            <person name="Kim J.S."/>
            <person name="Lee S.Y."/>
            <person name="In Y.H."/>
            <person name="Choi S.S."/>
            <person name="Rih J.-K."/>
            <person name="Kim C.H."/>
            <person name="Jeong H."/>
            <person name="Hur C.G."/>
            <person name="Kim J.J."/>
        </authorList>
    </citation>
    <scope>NUCLEOTIDE SEQUENCE [LARGE SCALE GENOMIC DNA]</scope>
    <source>
        <strain>KCTC 0769BP / MBEL55E</strain>
    </source>
</reference>
<feature type="chain" id="PRO_0000195304" description="Glucose-1-phosphate adenylyltransferase">
    <location>
        <begin position="1"/>
        <end position="434"/>
    </location>
</feature>
<feature type="binding site" evidence="1">
    <location>
        <position position="112"/>
    </location>
    <ligand>
        <name>alpha-D-glucose 1-phosphate</name>
        <dbReference type="ChEBI" id="CHEBI:58601"/>
    </ligand>
</feature>
<feature type="binding site" evidence="1">
    <location>
        <position position="178"/>
    </location>
    <ligand>
        <name>alpha-D-glucose 1-phosphate</name>
        <dbReference type="ChEBI" id="CHEBI:58601"/>
    </ligand>
</feature>
<feature type="binding site" evidence="1">
    <location>
        <begin position="193"/>
        <end position="194"/>
    </location>
    <ligand>
        <name>alpha-D-glucose 1-phosphate</name>
        <dbReference type="ChEBI" id="CHEBI:58601"/>
    </ligand>
</feature>
<feature type="binding site" evidence="1">
    <location>
        <position position="211"/>
    </location>
    <ligand>
        <name>alpha-D-glucose 1-phosphate</name>
        <dbReference type="ChEBI" id="CHEBI:58601"/>
    </ligand>
</feature>
<sequence length="434" mass="48525">MNNAVLNQPNKYDLVKDTLVLILAGGRGSRLHELTDKRAKPALYFGGNRRIIDFALSNCINSGLNRIGVITQYAAHSLLRHLQTGWSFLPQERGEFVDMLPARQQIDDNTWYRGTADSVYQNLAIIRGHYKPKYVLILAGDHIYKMDYSQMLLDHVSSGAKCTVGCIEVPREEAKEFGVMAVNETLKVKAFVEKPQDPPAMIGKPNSSLASMGIYVFNADYLYEALDRIKTPNTSHDFGKDVMPLALNDGVLYAHPFDRSCKGRNTEGAIYWKDVGTLDSFWQANIDLVSEEPQLDIYDQTWPIRGNPVQAYPSKFFYDEPNCKQVDNSLIAGGCMVKNASISYSVLFDNVSVNAGSSIEQSVILPQVKIGKNCMLRRCIIDRHVQIPDGMQIGVDLELDSKRFRISKNGIVLVTESMLHKLNGKSVASEAHLD</sequence>
<proteinExistence type="inferred from homology"/>
<gene>
    <name evidence="1" type="primary">glgC</name>
    <name type="ordered locus">MS1121</name>
</gene>
<keyword id="KW-0067">ATP-binding</keyword>
<keyword id="KW-0119">Carbohydrate metabolism</keyword>
<keyword id="KW-0320">Glycogen biosynthesis</keyword>
<keyword id="KW-0321">Glycogen metabolism</keyword>
<keyword id="KW-0547">Nucleotide-binding</keyword>
<keyword id="KW-0548">Nucleotidyltransferase</keyword>
<keyword id="KW-0808">Transferase</keyword>
<accession>Q65TI2</accession>
<evidence type="ECO:0000255" key="1">
    <source>
        <dbReference type="HAMAP-Rule" id="MF_00624"/>
    </source>
</evidence>
<protein>
    <recommendedName>
        <fullName evidence="1">Glucose-1-phosphate adenylyltransferase</fullName>
        <ecNumber evidence="1">2.7.7.27</ecNumber>
    </recommendedName>
    <alternativeName>
        <fullName evidence="1">ADP-glucose pyrophosphorylase</fullName>
        <shortName evidence="1">ADPGlc PPase</shortName>
    </alternativeName>
    <alternativeName>
        <fullName evidence="1">ADP-glucose synthase</fullName>
    </alternativeName>
</protein>
<name>GLGC_MANSM</name>
<dbReference type="EC" id="2.7.7.27" evidence="1"/>
<dbReference type="EMBL" id="AE016827">
    <property type="protein sequence ID" value="AAU37728.1"/>
    <property type="molecule type" value="Genomic_DNA"/>
</dbReference>
<dbReference type="RefSeq" id="WP_011200296.1">
    <property type="nucleotide sequence ID" value="NC_006300.1"/>
</dbReference>
<dbReference type="SMR" id="Q65TI2"/>
<dbReference type="STRING" id="221988.MS1121"/>
<dbReference type="KEGG" id="msu:MS1121"/>
<dbReference type="eggNOG" id="COG0448">
    <property type="taxonomic scope" value="Bacteria"/>
</dbReference>
<dbReference type="HOGENOM" id="CLU_029499_14_1_6"/>
<dbReference type="OrthoDB" id="9801810at2"/>
<dbReference type="UniPathway" id="UPA00164"/>
<dbReference type="Proteomes" id="UP000000607">
    <property type="component" value="Chromosome"/>
</dbReference>
<dbReference type="GO" id="GO:0005524">
    <property type="term" value="F:ATP binding"/>
    <property type="evidence" value="ECO:0007669"/>
    <property type="project" value="UniProtKB-KW"/>
</dbReference>
<dbReference type="GO" id="GO:0008878">
    <property type="term" value="F:glucose-1-phosphate adenylyltransferase activity"/>
    <property type="evidence" value="ECO:0007669"/>
    <property type="project" value="UniProtKB-UniRule"/>
</dbReference>
<dbReference type="GO" id="GO:0005978">
    <property type="term" value="P:glycogen biosynthetic process"/>
    <property type="evidence" value="ECO:0007669"/>
    <property type="project" value="UniProtKB-UniRule"/>
</dbReference>
<dbReference type="CDD" id="cd02508">
    <property type="entry name" value="ADP_Glucose_PP"/>
    <property type="match status" value="1"/>
</dbReference>
<dbReference type="CDD" id="cd04651">
    <property type="entry name" value="LbH_G1P_AT_C"/>
    <property type="match status" value="1"/>
</dbReference>
<dbReference type="Gene3D" id="2.160.10.10">
    <property type="entry name" value="Hexapeptide repeat proteins"/>
    <property type="match status" value="1"/>
</dbReference>
<dbReference type="Gene3D" id="3.90.550.10">
    <property type="entry name" value="Spore Coat Polysaccharide Biosynthesis Protein SpsA, Chain A"/>
    <property type="match status" value="1"/>
</dbReference>
<dbReference type="HAMAP" id="MF_00624">
    <property type="entry name" value="GlgC"/>
    <property type="match status" value="1"/>
</dbReference>
<dbReference type="InterPro" id="IPR011831">
    <property type="entry name" value="ADP-Glc_PPase"/>
</dbReference>
<dbReference type="InterPro" id="IPR005836">
    <property type="entry name" value="ADP_Glu_pyroP_CS"/>
</dbReference>
<dbReference type="InterPro" id="IPR023049">
    <property type="entry name" value="GlgC_bac"/>
</dbReference>
<dbReference type="InterPro" id="IPR056818">
    <property type="entry name" value="GlmU/GlgC-like_hexapep"/>
</dbReference>
<dbReference type="InterPro" id="IPR005835">
    <property type="entry name" value="NTP_transferase_dom"/>
</dbReference>
<dbReference type="InterPro" id="IPR029044">
    <property type="entry name" value="Nucleotide-diphossugar_trans"/>
</dbReference>
<dbReference type="InterPro" id="IPR011004">
    <property type="entry name" value="Trimer_LpxA-like_sf"/>
</dbReference>
<dbReference type="NCBIfam" id="TIGR02091">
    <property type="entry name" value="glgC"/>
    <property type="match status" value="1"/>
</dbReference>
<dbReference type="NCBIfam" id="NF001947">
    <property type="entry name" value="PRK00725.1"/>
    <property type="match status" value="1"/>
</dbReference>
<dbReference type="NCBIfam" id="NF002023">
    <property type="entry name" value="PRK00844.1"/>
    <property type="match status" value="1"/>
</dbReference>
<dbReference type="PANTHER" id="PTHR43523:SF2">
    <property type="entry name" value="GLUCOSE-1-PHOSPHATE ADENYLYLTRANSFERASE"/>
    <property type="match status" value="1"/>
</dbReference>
<dbReference type="PANTHER" id="PTHR43523">
    <property type="entry name" value="GLUCOSE-1-PHOSPHATE ADENYLYLTRANSFERASE-RELATED"/>
    <property type="match status" value="1"/>
</dbReference>
<dbReference type="Pfam" id="PF24894">
    <property type="entry name" value="Hexapep_GlmU"/>
    <property type="match status" value="1"/>
</dbReference>
<dbReference type="Pfam" id="PF00483">
    <property type="entry name" value="NTP_transferase"/>
    <property type="match status" value="1"/>
</dbReference>
<dbReference type="SUPFAM" id="SSF53448">
    <property type="entry name" value="Nucleotide-diphospho-sugar transferases"/>
    <property type="match status" value="1"/>
</dbReference>
<dbReference type="SUPFAM" id="SSF51161">
    <property type="entry name" value="Trimeric LpxA-like enzymes"/>
    <property type="match status" value="1"/>
</dbReference>
<dbReference type="PROSITE" id="PS00808">
    <property type="entry name" value="ADP_GLC_PYROPHOSPH_1"/>
    <property type="match status" value="1"/>
</dbReference>
<dbReference type="PROSITE" id="PS00809">
    <property type="entry name" value="ADP_GLC_PYROPHOSPH_2"/>
    <property type="match status" value="1"/>
</dbReference>
<dbReference type="PROSITE" id="PS00810">
    <property type="entry name" value="ADP_GLC_PYROPHOSPH_3"/>
    <property type="match status" value="1"/>
</dbReference>